<accession>O28084</accession>
<protein>
    <recommendedName>
        <fullName evidence="1">3-isopropylmalate dehydratase large subunit 2</fullName>
        <ecNumber evidence="1">4.2.1.33</ecNumber>
    </recommendedName>
    <alternativeName>
        <fullName evidence="1">Alpha-IPM isomerase 2</fullName>
        <shortName evidence="1">IPMI 2</shortName>
    </alternativeName>
    <alternativeName>
        <fullName evidence="1">Isopropylmalate isomerase 2</fullName>
    </alternativeName>
</protein>
<proteinExistence type="inferred from homology"/>
<dbReference type="EC" id="4.2.1.33" evidence="1"/>
<dbReference type="EMBL" id="AE000782">
    <property type="protein sequence ID" value="AAB89057.1"/>
    <property type="molecule type" value="Genomic_DNA"/>
</dbReference>
<dbReference type="PIR" id="G69524">
    <property type="entry name" value="G69524"/>
</dbReference>
<dbReference type="RefSeq" id="WP_010879688.1">
    <property type="nucleotide sequence ID" value="NC_000917.1"/>
</dbReference>
<dbReference type="SMR" id="O28084"/>
<dbReference type="STRING" id="224325.AF_2199"/>
<dbReference type="PaxDb" id="224325-AF_2199"/>
<dbReference type="EnsemblBacteria" id="AAB89057">
    <property type="protein sequence ID" value="AAB89057"/>
    <property type="gene ID" value="AF_2199"/>
</dbReference>
<dbReference type="KEGG" id="afu:AF_2199"/>
<dbReference type="eggNOG" id="arCOG01698">
    <property type="taxonomic scope" value="Archaea"/>
</dbReference>
<dbReference type="HOGENOM" id="CLU_006714_3_4_2"/>
<dbReference type="OrthoDB" id="255at2157"/>
<dbReference type="PhylomeDB" id="O28084"/>
<dbReference type="UniPathway" id="UPA00048">
    <property type="reaction ID" value="UER00071"/>
</dbReference>
<dbReference type="Proteomes" id="UP000002199">
    <property type="component" value="Chromosome"/>
</dbReference>
<dbReference type="GO" id="GO:0003861">
    <property type="term" value="F:3-isopropylmalate dehydratase activity"/>
    <property type="evidence" value="ECO:0007669"/>
    <property type="project" value="UniProtKB-UniRule"/>
</dbReference>
<dbReference type="GO" id="GO:0051539">
    <property type="term" value="F:4 iron, 4 sulfur cluster binding"/>
    <property type="evidence" value="ECO:0007669"/>
    <property type="project" value="UniProtKB-KW"/>
</dbReference>
<dbReference type="GO" id="GO:0046872">
    <property type="term" value="F:metal ion binding"/>
    <property type="evidence" value="ECO:0007669"/>
    <property type="project" value="UniProtKB-KW"/>
</dbReference>
<dbReference type="GO" id="GO:0009098">
    <property type="term" value="P:L-leucine biosynthetic process"/>
    <property type="evidence" value="ECO:0007669"/>
    <property type="project" value="UniProtKB-UniRule"/>
</dbReference>
<dbReference type="CDD" id="cd01583">
    <property type="entry name" value="IPMI"/>
    <property type="match status" value="1"/>
</dbReference>
<dbReference type="Gene3D" id="3.30.499.10">
    <property type="entry name" value="Aconitase, domain 3"/>
    <property type="match status" value="2"/>
</dbReference>
<dbReference type="HAMAP" id="MF_01027">
    <property type="entry name" value="LeuC_type2"/>
    <property type="match status" value="1"/>
</dbReference>
<dbReference type="InterPro" id="IPR015931">
    <property type="entry name" value="Acnase/IPM_dHydase_lsu_aba_1/3"/>
</dbReference>
<dbReference type="InterPro" id="IPR001030">
    <property type="entry name" value="Acoase/IPM_deHydtase_lsu_aba"/>
</dbReference>
<dbReference type="InterPro" id="IPR018136">
    <property type="entry name" value="Aconitase_4Fe-4S_BS"/>
</dbReference>
<dbReference type="InterPro" id="IPR036008">
    <property type="entry name" value="Aconitase_4Fe-4S_dom"/>
</dbReference>
<dbReference type="InterPro" id="IPR011826">
    <property type="entry name" value="HAcnase/IPMdehydase_lsu_prok"/>
</dbReference>
<dbReference type="InterPro" id="IPR006251">
    <property type="entry name" value="Homoacnase/IPMdehydase_lsu"/>
</dbReference>
<dbReference type="InterPro" id="IPR050067">
    <property type="entry name" value="IPM_dehydratase_rel_enz"/>
</dbReference>
<dbReference type="InterPro" id="IPR033941">
    <property type="entry name" value="IPMI_cat"/>
</dbReference>
<dbReference type="NCBIfam" id="TIGR01343">
    <property type="entry name" value="hacA_fam"/>
    <property type="match status" value="1"/>
</dbReference>
<dbReference type="NCBIfam" id="TIGR02086">
    <property type="entry name" value="IPMI_arch"/>
    <property type="match status" value="1"/>
</dbReference>
<dbReference type="NCBIfam" id="NF001614">
    <property type="entry name" value="PRK00402.1"/>
    <property type="match status" value="1"/>
</dbReference>
<dbReference type="PANTHER" id="PTHR43822:SF2">
    <property type="entry name" value="HOMOACONITASE, MITOCHONDRIAL"/>
    <property type="match status" value="1"/>
</dbReference>
<dbReference type="PANTHER" id="PTHR43822">
    <property type="entry name" value="HOMOACONITASE, MITOCHONDRIAL-RELATED"/>
    <property type="match status" value="1"/>
</dbReference>
<dbReference type="Pfam" id="PF00330">
    <property type="entry name" value="Aconitase"/>
    <property type="match status" value="1"/>
</dbReference>
<dbReference type="PRINTS" id="PR00415">
    <property type="entry name" value="ACONITASE"/>
</dbReference>
<dbReference type="SUPFAM" id="SSF53732">
    <property type="entry name" value="Aconitase iron-sulfur domain"/>
    <property type="match status" value="1"/>
</dbReference>
<dbReference type="PROSITE" id="PS00450">
    <property type="entry name" value="ACONITASE_1"/>
    <property type="match status" value="1"/>
</dbReference>
<dbReference type="PROSITE" id="PS01244">
    <property type="entry name" value="ACONITASE_2"/>
    <property type="match status" value="1"/>
</dbReference>
<comment type="function">
    <text evidence="1">Catalyzes the isomerization between 2-isopropylmalate and 3-isopropylmalate, via the formation of 2-isopropylmaleate.</text>
</comment>
<comment type="catalytic activity">
    <reaction evidence="1">
        <text>(2R,3S)-3-isopropylmalate = (2S)-2-isopropylmalate</text>
        <dbReference type="Rhea" id="RHEA:32287"/>
        <dbReference type="ChEBI" id="CHEBI:1178"/>
        <dbReference type="ChEBI" id="CHEBI:35121"/>
        <dbReference type="EC" id="4.2.1.33"/>
    </reaction>
</comment>
<comment type="cofactor">
    <cofactor evidence="1">
        <name>[4Fe-4S] cluster</name>
        <dbReference type="ChEBI" id="CHEBI:49883"/>
    </cofactor>
    <text evidence="1">Binds 1 [4Fe-4S] cluster per subunit.</text>
</comment>
<comment type="pathway">
    <text evidence="1">Amino-acid biosynthesis; L-leucine biosynthesis; L-leucine from 3-methyl-2-oxobutanoate: step 2/4.</text>
</comment>
<comment type="subunit">
    <text evidence="1">Heterodimer of LeuC and LeuD.</text>
</comment>
<comment type="similarity">
    <text evidence="1">Belongs to the aconitase/IPM isomerase family. LeuC type 2 subfamily.</text>
</comment>
<reference key="1">
    <citation type="journal article" date="1997" name="Nature">
        <title>The complete genome sequence of the hyperthermophilic, sulphate-reducing archaeon Archaeoglobus fulgidus.</title>
        <authorList>
            <person name="Klenk H.-P."/>
            <person name="Clayton R.A."/>
            <person name="Tomb J.-F."/>
            <person name="White O."/>
            <person name="Nelson K.E."/>
            <person name="Ketchum K.A."/>
            <person name="Dodson R.J."/>
            <person name="Gwinn M.L."/>
            <person name="Hickey E.K."/>
            <person name="Peterson J.D."/>
            <person name="Richardson D.L."/>
            <person name="Kerlavage A.R."/>
            <person name="Graham D.E."/>
            <person name="Kyrpides N.C."/>
            <person name="Fleischmann R.D."/>
            <person name="Quackenbush J."/>
            <person name="Lee N.H."/>
            <person name="Sutton G.G."/>
            <person name="Gill S.R."/>
            <person name="Kirkness E.F."/>
            <person name="Dougherty B.A."/>
            <person name="McKenney K."/>
            <person name="Adams M.D."/>
            <person name="Loftus B.J."/>
            <person name="Peterson S.N."/>
            <person name="Reich C.I."/>
            <person name="McNeil L.K."/>
            <person name="Badger J.H."/>
            <person name="Glodek A."/>
            <person name="Zhou L."/>
            <person name="Overbeek R."/>
            <person name="Gocayne J.D."/>
            <person name="Weidman J.F."/>
            <person name="McDonald L.A."/>
            <person name="Utterback T.R."/>
            <person name="Cotton M.D."/>
            <person name="Spriggs T."/>
            <person name="Artiach P."/>
            <person name="Kaine B.P."/>
            <person name="Sykes S.M."/>
            <person name="Sadow P.W."/>
            <person name="D'Andrea K.P."/>
            <person name="Bowman C."/>
            <person name="Fujii C."/>
            <person name="Garland S.A."/>
            <person name="Mason T.M."/>
            <person name="Olsen G.J."/>
            <person name="Fraser C.M."/>
            <person name="Smith H.O."/>
            <person name="Woese C.R."/>
            <person name="Venter J.C."/>
        </authorList>
    </citation>
    <scope>NUCLEOTIDE SEQUENCE [LARGE SCALE GENOMIC DNA]</scope>
    <source>
        <strain>ATCC 49558 / DSM 4304 / JCM 9628 / NBRC 100126 / VC-16</strain>
    </source>
</reference>
<organism>
    <name type="scientific">Archaeoglobus fulgidus (strain ATCC 49558 / DSM 4304 / JCM 9628 / NBRC 100126 / VC-16)</name>
    <dbReference type="NCBI Taxonomy" id="224325"/>
    <lineage>
        <taxon>Archaea</taxon>
        <taxon>Methanobacteriati</taxon>
        <taxon>Methanobacteriota</taxon>
        <taxon>Archaeoglobi</taxon>
        <taxon>Archaeoglobales</taxon>
        <taxon>Archaeoglobaceae</taxon>
        <taxon>Archaeoglobus</taxon>
    </lineage>
</organism>
<gene>
    <name evidence="1" type="primary">leuC2</name>
    <name type="ordered locus">AF_2199</name>
</gene>
<keyword id="KW-0004">4Fe-4S</keyword>
<keyword id="KW-0028">Amino-acid biosynthesis</keyword>
<keyword id="KW-0100">Branched-chain amino acid biosynthesis</keyword>
<keyword id="KW-0408">Iron</keyword>
<keyword id="KW-0411">Iron-sulfur</keyword>
<keyword id="KW-0432">Leucine biosynthesis</keyword>
<keyword id="KW-0456">Lyase</keyword>
<keyword id="KW-0479">Metal-binding</keyword>
<keyword id="KW-1185">Reference proteome</keyword>
<name>LEUC2_ARCFU</name>
<sequence>MGKTIAEKILSEKSKSDAYAGDIVVAEIDQIALQDGTAPLAIRQLMELGTEVRAADRTHFFVDHAAPSPRRELSNDQKFIYEFAKKVGADFNPPGEGIIHQIMVERYVKPGDLAVGADSHTCTYGGIGAFSTGMGSTDVAVAIALGKNWFRVPESFRVQLDGSLPKGVFAKDVILKLIGDLGVDGATYKALEFHGECAENMTVEERLTIANMAVECGAKAGIFESDENTRKFLAELGREGDFREVKADEDAEYEKEIYMDVSSLVPVVSKPHNVDNVAEISEVEGTEVNQVYIGTCTNGRLSDLEVAARILKGRKVKEGVRLIVVPASRRVYLQALDKGLIRVFVEAGGMVLNPGCGPCVGIHQGILADGEVCISTQNRNFKGRMGNPNAEIFLASPATAAASAVKGYIADPREFL</sequence>
<feature type="chain" id="PRO_0000076865" description="3-isopropylmalate dehydratase large subunit 2">
    <location>
        <begin position="1"/>
        <end position="416"/>
    </location>
</feature>
<feature type="binding site" evidence="1">
    <location>
        <position position="296"/>
    </location>
    <ligand>
        <name>[4Fe-4S] cluster</name>
        <dbReference type="ChEBI" id="CHEBI:49883"/>
    </ligand>
</feature>
<feature type="binding site" evidence="1">
    <location>
        <position position="356"/>
    </location>
    <ligand>
        <name>[4Fe-4S] cluster</name>
        <dbReference type="ChEBI" id="CHEBI:49883"/>
    </ligand>
</feature>
<feature type="binding site" evidence="1">
    <location>
        <position position="359"/>
    </location>
    <ligand>
        <name>[4Fe-4S] cluster</name>
        <dbReference type="ChEBI" id="CHEBI:49883"/>
    </ligand>
</feature>
<evidence type="ECO:0000255" key="1">
    <source>
        <dbReference type="HAMAP-Rule" id="MF_01027"/>
    </source>
</evidence>